<protein>
    <recommendedName>
        <fullName>Cytochrome c oxidase subunit 3</fullName>
        <ecNumber>7.1.1.9</ecNumber>
    </recommendedName>
    <alternativeName>
        <fullName>Cytochrome c oxidase polypeptide III</fullName>
    </alternativeName>
</protein>
<dbReference type="EC" id="7.1.1.9"/>
<dbReference type="EMBL" id="J01420">
    <property type="protein sequence ID" value="AAB48650.1"/>
    <property type="molecule type" value="Genomic_DNA"/>
</dbReference>
<dbReference type="EMBL" id="V00711">
    <property type="protein sequence ID" value="CAA24090.1"/>
    <property type="status" value="ALT_SEQ"/>
    <property type="molecule type" value="Genomic_DNA"/>
</dbReference>
<dbReference type="EMBL" id="AY172335">
    <property type="protein sequence ID" value="AAN85128.1"/>
    <property type="molecule type" value="Genomic_DNA"/>
</dbReference>
<dbReference type="PIR" id="A00484">
    <property type="entry name" value="OTMS3"/>
</dbReference>
<dbReference type="PDB" id="7O37">
    <property type="method" value="EM"/>
    <property type="resolution" value="3.20 A"/>
    <property type="chains" value="c=1-261"/>
</dbReference>
<dbReference type="PDB" id="7O3C">
    <property type="method" value="EM"/>
    <property type="resolution" value="3.30 A"/>
    <property type="chains" value="c=1-261"/>
</dbReference>
<dbReference type="PDB" id="7O3E">
    <property type="method" value="EM"/>
    <property type="resolution" value="3.60 A"/>
    <property type="chains" value="c=1-261"/>
</dbReference>
<dbReference type="PDB" id="8PW5">
    <property type="method" value="EM"/>
    <property type="resolution" value="3.60 A"/>
    <property type="chains" value="c/p=1-261"/>
</dbReference>
<dbReference type="PDB" id="8PW6">
    <property type="method" value="EM"/>
    <property type="resolution" value="3.30 A"/>
    <property type="chains" value="p=1-261"/>
</dbReference>
<dbReference type="PDB" id="8PW7">
    <property type="method" value="EM"/>
    <property type="resolution" value="3.50 A"/>
    <property type="chains" value="p=1-261"/>
</dbReference>
<dbReference type="PDBsum" id="7O37"/>
<dbReference type="PDBsum" id="7O3C"/>
<dbReference type="PDBsum" id="7O3E"/>
<dbReference type="PDBsum" id="8PW5"/>
<dbReference type="PDBsum" id="8PW6"/>
<dbReference type="PDBsum" id="8PW7"/>
<dbReference type="EMDB" id="EMD-12702"/>
<dbReference type="EMDB" id="EMD-12703"/>
<dbReference type="EMDB" id="EMD-12705"/>
<dbReference type="EMDB" id="EMD-17989"/>
<dbReference type="EMDB" id="EMD-17990"/>
<dbReference type="EMDB" id="EMD-17991"/>
<dbReference type="SMR" id="P00416"/>
<dbReference type="BioGRID" id="201543">
    <property type="interactions" value="2"/>
</dbReference>
<dbReference type="CORUM" id="P00416"/>
<dbReference type="FunCoup" id="P00416">
    <property type="interactions" value="134"/>
</dbReference>
<dbReference type="STRING" id="10090.ENSMUSP00000080997"/>
<dbReference type="GlyGen" id="P00416">
    <property type="glycosylation" value="1 site, 1 O-linked glycan (1 site)"/>
</dbReference>
<dbReference type="PhosphoSitePlus" id="P00416"/>
<dbReference type="jPOST" id="P00416"/>
<dbReference type="PaxDb" id="10090-ENSMUSP00000080997"/>
<dbReference type="ProteomicsDB" id="284101"/>
<dbReference type="Pumba" id="P00416"/>
<dbReference type="Antibodypedia" id="35359">
    <property type="antibodies" value="137 antibodies from 24 providers"/>
</dbReference>
<dbReference type="Ensembl" id="ENSMUST00000082409.1">
    <property type="protein sequence ID" value="ENSMUSP00000080997.1"/>
    <property type="gene ID" value="ENSMUSG00000064358.1"/>
</dbReference>
<dbReference type="KEGG" id="mmu:17710"/>
<dbReference type="AGR" id="MGI:102502"/>
<dbReference type="CTD" id="4514"/>
<dbReference type="MGI" id="MGI:102502">
    <property type="gene designation" value="mt-Co3"/>
</dbReference>
<dbReference type="VEuPathDB" id="HostDB:ENSMUSG00000064358"/>
<dbReference type="eggNOG" id="KOG4664">
    <property type="taxonomic scope" value="Eukaryota"/>
</dbReference>
<dbReference type="GeneTree" id="ENSGT00390000013064"/>
<dbReference type="HOGENOM" id="CLU_044071_0_0_1"/>
<dbReference type="InParanoid" id="P00416"/>
<dbReference type="OMA" id="SIYWWGS"/>
<dbReference type="OrthoDB" id="10050457at2759"/>
<dbReference type="PhylomeDB" id="P00416"/>
<dbReference type="Reactome" id="R-MMU-5628897">
    <property type="pathway name" value="TP53 Regulates Metabolic Genes"/>
</dbReference>
<dbReference type="Reactome" id="R-MMU-611105">
    <property type="pathway name" value="Respiratory electron transport"/>
</dbReference>
<dbReference type="Reactome" id="R-MMU-9707564">
    <property type="pathway name" value="Cytoprotection by HMOX1"/>
</dbReference>
<dbReference type="Reactome" id="R-MMU-9864848">
    <property type="pathway name" value="Complex IV assembly"/>
</dbReference>
<dbReference type="ChiTaRS" id="mt-Co3">
    <property type="organism name" value="mouse"/>
</dbReference>
<dbReference type="PRO" id="PR:P00416"/>
<dbReference type="Proteomes" id="UP000000589">
    <property type="component" value="Mitochondrion MT"/>
</dbReference>
<dbReference type="RNAct" id="P00416">
    <property type="molecule type" value="protein"/>
</dbReference>
<dbReference type="Bgee" id="ENSMUSG00000064358">
    <property type="expression patterns" value="Expressed in quadriceps femoris and 104 other cell types or tissues"/>
</dbReference>
<dbReference type="ExpressionAtlas" id="P00416">
    <property type="expression patterns" value="baseline and differential"/>
</dbReference>
<dbReference type="GO" id="GO:0005743">
    <property type="term" value="C:mitochondrial inner membrane"/>
    <property type="evidence" value="ECO:0000314"/>
    <property type="project" value="UniProtKB"/>
</dbReference>
<dbReference type="GO" id="GO:0005739">
    <property type="term" value="C:mitochondrion"/>
    <property type="evidence" value="ECO:0007005"/>
    <property type="project" value="MGI"/>
</dbReference>
<dbReference type="GO" id="GO:0045277">
    <property type="term" value="C:respiratory chain complex IV"/>
    <property type="evidence" value="ECO:0000314"/>
    <property type="project" value="UniProtKB"/>
</dbReference>
<dbReference type="GO" id="GO:0004129">
    <property type="term" value="F:cytochrome-c oxidase activity"/>
    <property type="evidence" value="ECO:0007669"/>
    <property type="project" value="UniProtKB-EC"/>
</dbReference>
<dbReference type="GO" id="GO:0019646">
    <property type="term" value="P:aerobic electron transport chain"/>
    <property type="evidence" value="ECO:0007669"/>
    <property type="project" value="InterPro"/>
</dbReference>
<dbReference type="GO" id="GO:0008535">
    <property type="term" value="P:respiratory chain complex IV assembly"/>
    <property type="evidence" value="ECO:0000250"/>
    <property type="project" value="UniProtKB"/>
</dbReference>
<dbReference type="CDD" id="cd01665">
    <property type="entry name" value="Cyt_c_Oxidase_III"/>
    <property type="match status" value="1"/>
</dbReference>
<dbReference type="FunFam" id="1.10.287.70:FF:000048">
    <property type="entry name" value="Cytochrome c oxidase subunit 3"/>
    <property type="match status" value="1"/>
</dbReference>
<dbReference type="FunFam" id="1.20.120.80:FF:000002">
    <property type="entry name" value="Cytochrome c oxidase subunit 3"/>
    <property type="match status" value="1"/>
</dbReference>
<dbReference type="Gene3D" id="1.10.287.70">
    <property type="match status" value="1"/>
</dbReference>
<dbReference type="Gene3D" id="1.20.120.80">
    <property type="entry name" value="Cytochrome c oxidase, subunit III, four-helix bundle"/>
    <property type="match status" value="1"/>
</dbReference>
<dbReference type="InterPro" id="IPR024791">
    <property type="entry name" value="Cyt_c/ubiquinol_Oxase_su3"/>
</dbReference>
<dbReference type="InterPro" id="IPR033945">
    <property type="entry name" value="Cyt_c_oxase_su3_dom"/>
</dbReference>
<dbReference type="InterPro" id="IPR000298">
    <property type="entry name" value="Cyt_c_oxidase-like_su3"/>
</dbReference>
<dbReference type="InterPro" id="IPR035973">
    <property type="entry name" value="Cyt_c_oxidase_su3-like_sf"/>
</dbReference>
<dbReference type="InterPro" id="IPR013833">
    <property type="entry name" value="Cyt_c_oxidase_su3_a-hlx"/>
</dbReference>
<dbReference type="PANTHER" id="PTHR11403:SF7">
    <property type="entry name" value="CYTOCHROME C OXIDASE SUBUNIT 3"/>
    <property type="match status" value="1"/>
</dbReference>
<dbReference type="PANTHER" id="PTHR11403">
    <property type="entry name" value="CYTOCHROME C OXIDASE SUBUNIT III"/>
    <property type="match status" value="1"/>
</dbReference>
<dbReference type="Pfam" id="PF00510">
    <property type="entry name" value="COX3"/>
    <property type="match status" value="1"/>
</dbReference>
<dbReference type="SUPFAM" id="SSF81452">
    <property type="entry name" value="Cytochrome c oxidase subunit III-like"/>
    <property type="match status" value="1"/>
</dbReference>
<dbReference type="PROSITE" id="PS50253">
    <property type="entry name" value="COX3"/>
    <property type="match status" value="1"/>
</dbReference>
<accession>P00416</accession>
<geneLocation type="mitochondrion"/>
<gene>
    <name type="primary">mt-Co3</name>
    <name type="synonym">COIII</name>
    <name type="synonym">Mtco3</name>
</gene>
<keyword id="KW-0002">3D-structure</keyword>
<keyword id="KW-0472">Membrane</keyword>
<keyword id="KW-0496">Mitochondrion</keyword>
<keyword id="KW-0999">Mitochondrion inner membrane</keyword>
<keyword id="KW-1185">Reference proteome</keyword>
<keyword id="KW-1278">Translocase</keyword>
<keyword id="KW-0812">Transmembrane</keyword>
<keyword id="KW-1133">Transmembrane helix</keyword>
<proteinExistence type="evidence at protein level"/>
<reference key="1">
    <citation type="journal article" date="1981" name="Cell">
        <title>Sequence and gene organization of mouse mitochondrial DNA.</title>
        <authorList>
            <person name="Bibb M.J."/>
            <person name="van Etten R.A."/>
            <person name="Wright C.T."/>
            <person name="Walberg M.W."/>
            <person name="Clayton D.A."/>
        </authorList>
    </citation>
    <scope>NUCLEOTIDE SEQUENCE [GENOMIC DNA]</scope>
</reference>
<reference key="2">
    <citation type="journal article" date="2003" name="Nucleic Acids Res.">
        <title>Revisiting the mouse mitochondrial DNA sequence.</title>
        <authorList>
            <person name="Bayona-Bafaluy M.P."/>
            <person name="Acin-Perez R."/>
            <person name="Mullikin J.C."/>
            <person name="Park J.S."/>
            <person name="Moreno-Loshuertos R."/>
            <person name="Hu P."/>
            <person name="Perez-Martos A."/>
            <person name="Fernandez-Silva P."/>
            <person name="Bai Y."/>
            <person name="Enriquez J.A."/>
        </authorList>
    </citation>
    <scope>NUCLEOTIDE SEQUENCE [LARGE SCALE GENOMIC DNA]</scope>
    <source>
        <strain>C57BL/6J</strain>
    </source>
</reference>
<reference key="3">
    <citation type="journal article" date="2010" name="Cell">
        <title>A tissue-specific atlas of mouse protein phosphorylation and expression.</title>
        <authorList>
            <person name="Huttlin E.L."/>
            <person name="Jedrychowski M.P."/>
            <person name="Elias J.E."/>
            <person name="Goswami T."/>
            <person name="Rad R."/>
            <person name="Beausoleil S.A."/>
            <person name="Villen J."/>
            <person name="Haas W."/>
            <person name="Sowa M.E."/>
            <person name="Gygi S.P."/>
        </authorList>
    </citation>
    <scope>IDENTIFICATION BY MASS SPECTROMETRY [LARGE SCALE ANALYSIS]</scope>
    <source>
        <tissue>Brain</tissue>
        <tissue>Brown adipose tissue</tissue>
        <tissue>Heart</tissue>
        <tissue>Kidney</tissue>
        <tissue>Liver</tissue>
        <tissue>Lung</tissue>
        <tissue>Pancreas</tissue>
        <tissue>Spleen</tissue>
        <tissue>Testis</tissue>
    </source>
</reference>
<reference evidence="5 6 7" key="4">
    <citation type="journal article" date="2021" name="Nature">
        <title>Structure and assembly of the mammalian mitochondrial supercomplex CIII2CIV.</title>
        <authorList>
            <person name="Vercellino I."/>
            <person name="Sazanov L.A."/>
        </authorList>
    </citation>
    <scope>STRUCTURE BY ELECTRON MICROSCOPY (3.20 ANGSTROMS) IN COMPLEX WITH MITOCHONDRIAL RESPIRATORY SUPERCOMPLEX</scope>
    <scope>FUNCTION</scope>
    <scope>SUBCELLULAR LOCATION</scope>
    <scope>SUBUNIT</scope>
</reference>
<reference evidence="8" key="5">
    <citation type="journal article" date="2024" name="Nat. Struct. Mol. Biol.">
        <title>SCAF1 drives the compositional diversity of mammalian respirasomes.</title>
        <authorList>
            <person name="Vercellino I."/>
            <person name="Sazanov L.A."/>
        </authorList>
    </citation>
    <scope>STRUCTURE BY ELECTRON MICROSCOPY (3.60 ANGSTROMS) IN COMPLEX WITH MITOCHONDRIAL RESPIRATORY SUPERCOMPLEX</scope>
    <scope>FUNCTION</scope>
    <scope>SUBCELLULAR LOCATION</scope>
    <scope>SUBUNIT</scope>
</reference>
<evidence type="ECO:0000250" key="1">
    <source>
        <dbReference type="UniProtKB" id="P00420"/>
    </source>
</evidence>
<evidence type="ECO:0000269" key="2">
    <source>
    </source>
</evidence>
<evidence type="ECO:0000269" key="3">
    <source>
    </source>
</evidence>
<evidence type="ECO:0000305" key="4"/>
<evidence type="ECO:0000312" key="5">
    <source>
        <dbReference type="PDB" id="7O3E"/>
    </source>
</evidence>
<evidence type="ECO:0007744" key="6">
    <source>
        <dbReference type="PDB" id="7O37"/>
    </source>
</evidence>
<evidence type="ECO:0007744" key="7">
    <source>
        <dbReference type="PDB" id="7O3C"/>
    </source>
</evidence>
<evidence type="ECO:0007744" key="8">
    <source>
        <dbReference type="PDB" id="8PW5"/>
    </source>
</evidence>
<evidence type="ECO:0007829" key="9">
    <source>
        <dbReference type="PDB" id="7O37"/>
    </source>
</evidence>
<evidence type="ECO:0007829" key="10">
    <source>
        <dbReference type="PDB" id="7O3C"/>
    </source>
</evidence>
<sequence>MTHQTHAYHMVNPSPWPLTGAFSALLLTSGLVMWFHYNSITLLTLGLLTNILTMYQWWRDVIREGTYQGHHTPIVQKGLRYGMILFIVSEVFFFAGFFWAFYHSSLVPTHDLGGCWPPTGISPLNPLEVPLLNTSVLLASGVSITWAHHSLMEGKRNHMNQALLITIMLGLYFTILQASEYFETSFSISDGIYGSTFFMATGFHGLHVIIGSTFLIVCLLRQLKFHFTSKHHFGFEAAAWYWHFVDVVWLFLYVSIYWWGS</sequence>
<organism>
    <name type="scientific">Mus musculus</name>
    <name type="common">Mouse</name>
    <dbReference type="NCBI Taxonomy" id="10090"/>
    <lineage>
        <taxon>Eukaryota</taxon>
        <taxon>Metazoa</taxon>
        <taxon>Chordata</taxon>
        <taxon>Craniata</taxon>
        <taxon>Vertebrata</taxon>
        <taxon>Euteleostomi</taxon>
        <taxon>Mammalia</taxon>
        <taxon>Eutheria</taxon>
        <taxon>Euarchontoglires</taxon>
        <taxon>Glires</taxon>
        <taxon>Rodentia</taxon>
        <taxon>Myomorpha</taxon>
        <taxon>Muroidea</taxon>
        <taxon>Muridae</taxon>
        <taxon>Murinae</taxon>
        <taxon>Mus</taxon>
        <taxon>Mus</taxon>
    </lineage>
</organism>
<feature type="chain" id="PRO_0000183809" description="Cytochrome c oxidase subunit 3">
    <location>
        <begin position="1"/>
        <end position="261"/>
    </location>
</feature>
<feature type="topological domain" description="Mitochondrial matrix" evidence="2 6 7">
    <location>
        <begin position="1"/>
        <end position="15"/>
    </location>
</feature>
<feature type="transmembrane region" description="Helical; Name=I" evidence="2 6 7">
    <location>
        <begin position="16"/>
        <end position="33"/>
    </location>
</feature>
<feature type="topological domain" description="Mitochondrial intermembrane" evidence="2 6 7">
    <location>
        <begin position="34"/>
        <end position="38"/>
    </location>
</feature>
<feature type="transmembrane region" description="Helical; Name=II" evidence="2 6 7">
    <location>
        <begin position="39"/>
        <end position="62"/>
    </location>
</feature>
<feature type="topological domain" description="Mitochondrial matrix" evidence="2 6 7">
    <location>
        <begin position="63"/>
        <end position="77"/>
    </location>
</feature>
<feature type="transmembrane region" description="Helical; Name=III" evidence="2 6 7">
    <location>
        <begin position="78"/>
        <end position="99"/>
    </location>
</feature>
<feature type="topological domain" description="Mitochondrial intermembrane" evidence="2 6 7">
    <location>
        <begin position="100"/>
        <end position="129"/>
    </location>
</feature>
<feature type="transmembrane region" description="Helical; Name=IV" evidence="2 6 7">
    <location>
        <begin position="130"/>
        <end position="150"/>
    </location>
</feature>
<feature type="topological domain" description="Mitochondrial matrix" evidence="2 6 7">
    <location>
        <begin position="151"/>
        <end position="156"/>
    </location>
</feature>
<feature type="transmembrane region" description="Helical; Name=V" evidence="2 6 7">
    <location>
        <begin position="157"/>
        <end position="178"/>
    </location>
</feature>
<feature type="topological domain" description="Mitochondrial intermembrane" evidence="2 6 7">
    <location>
        <begin position="179"/>
        <end position="198"/>
    </location>
</feature>
<feature type="transmembrane region" description="Helical; Name=VI" evidence="2 6 7">
    <location>
        <begin position="199"/>
        <end position="224"/>
    </location>
</feature>
<feature type="topological domain" description="Mitochondrial matrix" evidence="2 6 7">
    <location>
        <begin position="225"/>
        <end position="232"/>
    </location>
</feature>
<feature type="transmembrane region" description="Helical; Name=VII" evidence="2 6 7">
    <location>
        <begin position="233"/>
        <end position="255"/>
    </location>
</feature>
<feature type="topological domain" description="Mitochondrial intermembrane" evidence="2 6 7">
    <location>
        <begin position="256"/>
        <end position="261"/>
    </location>
</feature>
<feature type="sequence conflict" description="In Ref. 1; AAB48650/CAA24090." evidence="4" ref="1">
    <original>V</original>
    <variation>I</variation>
    <location>
        <position position="248"/>
    </location>
</feature>
<feature type="strand" evidence="10">
    <location>
        <begin position="6"/>
        <end position="8"/>
    </location>
</feature>
<feature type="helix" evidence="9">
    <location>
        <begin position="16"/>
        <end position="35"/>
    </location>
</feature>
<feature type="helix" evidence="9">
    <location>
        <begin position="41"/>
        <end position="66"/>
    </location>
</feature>
<feature type="helix" evidence="9">
    <location>
        <begin position="73"/>
        <end position="106"/>
    </location>
</feature>
<feature type="turn" evidence="9">
    <location>
        <begin position="110"/>
        <end position="113"/>
    </location>
</feature>
<feature type="strand" evidence="9">
    <location>
        <begin position="114"/>
        <end position="117"/>
    </location>
</feature>
<feature type="turn" evidence="10">
    <location>
        <begin position="126"/>
        <end position="128"/>
    </location>
</feature>
<feature type="helix" evidence="9">
    <location>
        <begin position="130"/>
        <end position="153"/>
    </location>
</feature>
<feature type="helix" evidence="9">
    <location>
        <begin position="157"/>
        <end position="182"/>
    </location>
</feature>
<feature type="helix" evidence="9">
    <location>
        <begin position="191"/>
        <end position="223"/>
    </location>
</feature>
<feature type="helix" evidence="9">
    <location>
        <begin position="233"/>
        <end position="255"/>
    </location>
</feature>
<feature type="turn" evidence="9">
    <location>
        <begin position="256"/>
        <end position="260"/>
    </location>
</feature>
<comment type="function">
    <text evidence="2 3">Component of the cytochrome c oxidase, the last enzyme in the mitochondrial electron transport chain which drives oxidative phosphorylation (PubMed:34616041, PubMed:38575788). The respiratory chain contains 3 multisubunit complexes succinate dehydrogenase (complex II, CII), ubiquinol-cytochrome c oxidoreductase (cytochrome b-c1 complex, complex III, CIII) and cytochrome c oxidase (complex IV, CIV), that cooperate to transfer electrons derived from NADH and succinate to molecular oxygen, creating an electrochemical gradient over the inner membrane that drives transmembrane transport and the ATP synthase (PubMed:34616041, PubMed:38575788). Cytochrome c oxidase is the component of the respiratory chain that catalyzes the reduction of oxygen to water (PubMed:34616041). Electrons originating from reduced cytochrome c in the intermembrane space (IMS) are transferred via the dinuclear copper A center (CU(A)) of subunit 2 and heme A of subunit 1 to the active site in subunit 1, a binuclear center (BNC) formed by heme A3 and copper B (CU(B)) (PubMed:34616041). The BNC reduces molecular oxygen to 2 water molecules using 4 electrons from cytochrome c in the IMS and 4 protons from the mitochondrial matrix (PubMed:34616041).</text>
</comment>
<comment type="catalytic activity">
    <reaction evidence="1">
        <text>4 Fe(II)-[cytochrome c] + O2 + 8 H(+)(in) = 4 Fe(III)-[cytochrome c] + 2 H2O + 4 H(+)(out)</text>
        <dbReference type="Rhea" id="RHEA:11436"/>
        <dbReference type="Rhea" id="RHEA-COMP:10350"/>
        <dbReference type="Rhea" id="RHEA-COMP:14399"/>
        <dbReference type="ChEBI" id="CHEBI:15377"/>
        <dbReference type="ChEBI" id="CHEBI:15378"/>
        <dbReference type="ChEBI" id="CHEBI:15379"/>
        <dbReference type="ChEBI" id="CHEBI:29033"/>
        <dbReference type="ChEBI" id="CHEBI:29034"/>
        <dbReference type="EC" id="7.1.1.9"/>
    </reaction>
    <physiologicalReaction direction="left-to-right" evidence="1">
        <dbReference type="Rhea" id="RHEA:11437"/>
    </physiologicalReaction>
</comment>
<comment type="subunit">
    <text evidence="2 3">Component of the cytochrome c oxidase (complex IV, CIV), a multisubunit enzyme composed of 14 subunits (PubMed:34616041, PubMed:38575788). The complex is composed of a catalytic core of 3 subunits MT-CO1, MT-CO2 and MT-CO3, encoded in the mitochondrial DNA, and 11 supernumerary subunits COX4I, COX5A, COX5B, COX6A, COX6B, COX6C, COX7A, COX7B, COX7C, COX8 and NDUFA4, which are encoded in the nuclear genome (PubMed:34616041, PubMed:38575788). The complex exists as a monomer or a dimer and forms supercomplexes (SCs) in the inner mitochondrial membrane with NADH-ubiquinone oxidoreductase (complex I, CI) and ubiquinol-cytochrome c oxidoreductase (cytochrome b-c1 complex, complex III, CIII), resulting in different assemblies (supercomplex SCI(1)III(2)IV(1) and megacomplex MCI(2)III(2)IV(2)) (PubMed:34616041, PubMed:38575788).</text>
</comment>
<comment type="subcellular location">
    <subcellularLocation>
        <location evidence="2 3">Mitochondrion inner membrane</location>
        <topology evidence="2">Multi-pass membrane protein</topology>
    </subcellularLocation>
</comment>
<comment type="similarity">
    <text evidence="4">Belongs to the cytochrome c oxidase subunit 3 family.</text>
</comment>
<comment type="sequence caution" evidence="4">
    <conflict type="erroneous termination">
        <sequence resource="EMBL-CDS" id="CAA24090"/>
    </conflict>
    <text>Extended C-terminus.</text>
</comment>
<name>COX3_MOUSE</name>